<keyword id="KW-1015">Disulfide bond</keyword>
<keyword id="KW-0496">Mitochondrion</keyword>
<keyword id="KW-1185">Reference proteome</keyword>
<keyword id="KW-0809">Transit peptide</keyword>
<evidence type="ECO:0000250" key="1"/>
<evidence type="ECO:0000250" key="2">
    <source>
        <dbReference type="UniProtKB" id="P38824"/>
    </source>
</evidence>
<evidence type="ECO:0000255" key="3"/>
<evidence type="ECO:0000255" key="4">
    <source>
        <dbReference type="PROSITE-ProRule" id="PRU01150"/>
    </source>
</evidence>
<evidence type="ECO:0000256" key="5">
    <source>
        <dbReference type="SAM" id="MobiDB-lite"/>
    </source>
</evidence>
<evidence type="ECO:0000305" key="6"/>
<dbReference type="EMBL" id="CR382126">
    <property type="protein sequence ID" value="CAG98858.1"/>
    <property type="molecule type" value="Genomic_DNA"/>
</dbReference>
<dbReference type="RefSeq" id="XP_456150.1">
    <property type="nucleotide sequence ID" value="XM_456150.1"/>
</dbReference>
<dbReference type="SMR" id="Q6CIT9"/>
<dbReference type="FunCoup" id="Q6CIT9">
    <property type="interactions" value="18"/>
</dbReference>
<dbReference type="STRING" id="284590.Q6CIT9"/>
<dbReference type="PaxDb" id="284590-Q6CIT9"/>
<dbReference type="KEGG" id="kla:KLLA0_F24024g"/>
<dbReference type="eggNOG" id="KOG4618">
    <property type="taxonomic scope" value="Eukaryota"/>
</dbReference>
<dbReference type="HOGENOM" id="CLU_153383_1_0_1"/>
<dbReference type="InParanoid" id="Q6CIT9"/>
<dbReference type="OMA" id="NPENHRH"/>
<dbReference type="Proteomes" id="UP000000598">
    <property type="component" value="Chromosome F"/>
</dbReference>
<dbReference type="GO" id="GO:0005758">
    <property type="term" value="C:mitochondrial intermembrane space"/>
    <property type="evidence" value="ECO:0007669"/>
    <property type="project" value="UniProtKB-SubCell"/>
</dbReference>
<dbReference type="GO" id="GO:0033108">
    <property type="term" value="P:mitochondrial respiratory chain complex assembly"/>
    <property type="evidence" value="ECO:0007669"/>
    <property type="project" value="TreeGrafter"/>
</dbReference>
<dbReference type="Gene3D" id="1.10.287.1130">
    <property type="entry name" value="CytochromE C oxidase copper chaperone"/>
    <property type="match status" value="1"/>
</dbReference>
<dbReference type="InterPro" id="IPR010625">
    <property type="entry name" value="CHCH"/>
</dbReference>
<dbReference type="InterPro" id="IPR051040">
    <property type="entry name" value="COX23"/>
</dbReference>
<dbReference type="InterPro" id="IPR009069">
    <property type="entry name" value="Cys_alpha_HP_mot_SF"/>
</dbReference>
<dbReference type="PANTHER" id="PTHR46811">
    <property type="entry name" value="COILED-COIL-HELIX-COILED-COIL-HELIX DOMAIN-CONTAINING PROTEIN 7"/>
    <property type="match status" value="1"/>
</dbReference>
<dbReference type="PANTHER" id="PTHR46811:SF1">
    <property type="entry name" value="COILED-COIL-HELIX-COILED-COIL-HELIX DOMAIN-CONTAINING PROTEIN 7"/>
    <property type="match status" value="1"/>
</dbReference>
<dbReference type="Pfam" id="PF06747">
    <property type="entry name" value="CHCH"/>
    <property type="match status" value="1"/>
</dbReference>
<dbReference type="SUPFAM" id="SSF47072">
    <property type="entry name" value="Cysteine alpha-hairpin motif"/>
    <property type="match status" value="1"/>
</dbReference>
<dbReference type="PROSITE" id="PS51808">
    <property type="entry name" value="CHCH"/>
    <property type="match status" value="1"/>
</dbReference>
<reference key="1">
    <citation type="journal article" date="2004" name="Nature">
        <title>Genome evolution in yeasts.</title>
        <authorList>
            <person name="Dujon B."/>
            <person name="Sherman D."/>
            <person name="Fischer G."/>
            <person name="Durrens P."/>
            <person name="Casaregola S."/>
            <person name="Lafontaine I."/>
            <person name="de Montigny J."/>
            <person name="Marck C."/>
            <person name="Neuveglise C."/>
            <person name="Talla E."/>
            <person name="Goffard N."/>
            <person name="Frangeul L."/>
            <person name="Aigle M."/>
            <person name="Anthouard V."/>
            <person name="Babour A."/>
            <person name="Barbe V."/>
            <person name="Barnay S."/>
            <person name="Blanchin S."/>
            <person name="Beckerich J.-M."/>
            <person name="Beyne E."/>
            <person name="Bleykasten C."/>
            <person name="Boisrame A."/>
            <person name="Boyer J."/>
            <person name="Cattolico L."/>
            <person name="Confanioleri F."/>
            <person name="de Daruvar A."/>
            <person name="Despons L."/>
            <person name="Fabre E."/>
            <person name="Fairhead C."/>
            <person name="Ferry-Dumazet H."/>
            <person name="Groppi A."/>
            <person name="Hantraye F."/>
            <person name="Hennequin C."/>
            <person name="Jauniaux N."/>
            <person name="Joyet P."/>
            <person name="Kachouri R."/>
            <person name="Kerrest A."/>
            <person name="Koszul R."/>
            <person name="Lemaire M."/>
            <person name="Lesur I."/>
            <person name="Ma L."/>
            <person name="Muller H."/>
            <person name="Nicaud J.-M."/>
            <person name="Nikolski M."/>
            <person name="Oztas S."/>
            <person name="Ozier-Kalogeropoulos O."/>
            <person name="Pellenz S."/>
            <person name="Potier S."/>
            <person name="Richard G.-F."/>
            <person name="Straub M.-L."/>
            <person name="Suleau A."/>
            <person name="Swennen D."/>
            <person name="Tekaia F."/>
            <person name="Wesolowski-Louvel M."/>
            <person name="Westhof E."/>
            <person name="Wirth B."/>
            <person name="Zeniou-Meyer M."/>
            <person name="Zivanovic Y."/>
            <person name="Bolotin-Fukuhara M."/>
            <person name="Thierry A."/>
            <person name="Bouchier C."/>
            <person name="Caudron B."/>
            <person name="Scarpelli C."/>
            <person name="Gaillardin C."/>
            <person name="Weissenbach J."/>
            <person name="Wincker P."/>
            <person name="Souciet J.-L."/>
        </authorList>
    </citation>
    <scope>NUCLEOTIDE SEQUENCE [LARGE SCALE GENOMIC DNA]</scope>
    <source>
        <strain>ATCC 8585 / CBS 2359 / DSM 70799 / NBRC 1267 / NRRL Y-1140 / WM37</strain>
    </source>
</reference>
<protein>
    <recommendedName>
        <fullName>Cytochrome c oxidase-assembly factor COX23, mitochondrial</fullName>
    </recommendedName>
</protein>
<feature type="transit peptide" description="Mitochondrion" evidence="3">
    <location>
        <begin position="1"/>
        <end status="unknown"/>
    </location>
</feature>
<feature type="chain" id="PRO_0000280664" description="Cytochrome c oxidase-assembly factor COX23, mitochondrial">
    <location>
        <begin status="unknown"/>
        <end position="122"/>
    </location>
</feature>
<feature type="domain" description="CHCH" evidence="4">
    <location>
        <begin position="72"/>
        <end position="114"/>
    </location>
</feature>
<feature type="region of interest" description="Disordered" evidence="5">
    <location>
        <begin position="1"/>
        <end position="26"/>
    </location>
</feature>
<feature type="short sequence motif" description="Cx9C motif 1" evidence="4">
    <location>
        <begin position="75"/>
        <end position="85"/>
    </location>
</feature>
<feature type="short sequence motif" description="Cx9C motif 2" evidence="4">
    <location>
        <begin position="96"/>
        <end position="106"/>
    </location>
</feature>
<feature type="disulfide bond" evidence="4">
    <location>
        <begin position="75"/>
        <end position="106"/>
    </location>
</feature>
<feature type="disulfide bond" evidence="4">
    <location>
        <begin position="85"/>
        <end position="96"/>
    </location>
</feature>
<proteinExistence type="inferred from homology"/>
<organism>
    <name type="scientific">Kluyveromyces lactis (strain ATCC 8585 / CBS 2359 / DSM 70799 / NBRC 1267 / NRRL Y-1140 / WM37)</name>
    <name type="common">Yeast</name>
    <name type="synonym">Candida sphaerica</name>
    <dbReference type="NCBI Taxonomy" id="284590"/>
    <lineage>
        <taxon>Eukaryota</taxon>
        <taxon>Fungi</taxon>
        <taxon>Dikarya</taxon>
        <taxon>Ascomycota</taxon>
        <taxon>Saccharomycotina</taxon>
        <taxon>Saccharomycetes</taxon>
        <taxon>Saccharomycetales</taxon>
        <taxon>Saccharomycetaceae</taxon>
        <taxon>Kluyveromyces</taxon>
    </lineage>
</organism>
<accession>Q6CIT9</accession>
<gene>
    <name type="primary">COX23</name>
    <name type="ordered locus">KLLA0F24024g</name>
</gene>
<name>COX23_KLULA</name>
<comment type="function">
    <text evidence="2">Required for the assembly of cytochrome c oxidase.</text>
</comment>
<comment type="subcellular location">
    <subcellularLocation>
        <location evidence="1">Mitochondrion intermembrane space</location>
    </subcellularLocation>
</comment>
<comment type="similarity">
    <text evidence="6">Belongs to the COX23 family.</text>
</comment>
<sequence>MTDKQETTQPAEKLQQPEKVAENVDPSLELNKTKVNFTPEKTDVNTYKFYPDDPESTLNRYRFAVKGASEYYDPCQESSKMSFKCLELNNYDRDLCHDYFDAYRECKKQWLKARREKREFWE</sequence>